<name>ATPA_ALCBS</name>
<protein>
    <recommendedName>
        <fullName evidence="1">ATP synthase subunit alpha</fullName>
        <ecNumber evidence="1">7.1.2.2</ecNumber>
    </recommendedName>
    <alternativeName>
        <fullName evidence="1">ATP synthase F1 sector subunit alpha</fullName>
    </alternativeName>
    <alternativeName>
        <fullName evidence="1">F-ATPase subunit alpha</fullName>
    </alternativeName>
</protein>
<gene>
    <name evidence="1" type="primary">atpA</name>
    <name type="ordered locus">ABO_2728</name>
</gene>
<accession>Q0VKX2</accession>
<reference key="1">
    <citation type="journal article" date="2006" name="Nat. Biotechnol.">
        <title>Genome sequence of the ubiquitous hydrocarbon-degrading marine bacterium Alcanivorax borkumensis.</title>
        <authorList>
            <person name="Schneiker S."/>
            <person name="Martins dos Santos V.A.P."/>
            <person name="Bartels D."/>
            <person name="Bekel T."/>
            <person name="Brecht M."/>
            <person name="Buhrmester J."/>
            <person name="Chernikova T.N."/>
            <person name="Denaro R."/>
            <person name="Ferrer M."/>
            <person name="Gertler C."/>
            <person name="Goesmann A."/>
            <person name="Golyshina O.V."/>
            <person name="Kaminski F."/>
            <person name="Khachane A.N."/>
            <person name="Lang S."/>
            <person name="Linke B."/>
            <person name="McHardy A.C."/>
            <person name="Meyer F."/>
            <person name="Nechitaylo T."/>
            <person name="Puehler A."/>
            <person name="Regenhardt D."/>
            <person name="Rupp O."/>
            <person name="Sabirova J.S."/>
            <person name="Selbitschka W."/>
            <person name="Yakimov M.M."/>
            <person name="Timmis K.N."/>
            <person name="Vorhoelter F.-J."/>
            <person name="Weidner S."/>
            <person name="Kaiser O."/>
            <person name="Golyshin P.N."/>
        </authorList>
    </citation>
    <scope>NUCLEOTIDE SEQUENCE [LARGE SCALE GENOMIC DNA]</scope>
    <source>
        <strain>ATCC 700651 / DSM 11573 / NCIMB 13689 / SK2</strain>
    </source>
</reference>
<sequence length="514" mass="55828">MQQLNPSEISEIIKSRIAKLDTSTEARNEGTVVSVSDGIVRIHGLADVMFGEMIEFEGGIYGMALNLEQDSVGAVVLGDYLGLAEGQKVRCTGRILEVPTGPEMLGRVVDALGNPIDGKGPIEAKQTDAVEKVAPGVIWRREVNEPVQTGYKSIDAMVPIGRGQRELIIGDRQIGKTAVAVDAIINQKDSGIKCVYVAIGQKQSTIANVVRKLEEHGAMENTIIVAASASDPASMQFLAPFAGCTMGEYFRDRGEDALIVYDDLTKQAWAYRQISLLLRRPPGREAYPGDVFYLHSRLLERAAKVNEDYVEKFTNGEVKGKTGSLTALPIIETQGGDVSAFVPTNVISITDGQIFLETDLFNSGIRPAMNAGVSVSRVGGAAQTKIVKKLGGGIRLALAQYRELAAFAQFASDLDDSTREQLEHGQAVTELMKQKQYSPMSVAEMGVVLYAANEGYLKGMEVEKIGAFEAALLDYMNSEKKALMDKINEKGDYNGEIEAEIKESLDQFKATQTW</sequence>
<feature type="chain" id="PRO_0000256080" description="ATP synthase subunit alpha">
    <location>
        <begin position="1"/>
        <end position="514"/>
    </location>
</feature>
<feature type="binding site" evidence="1">
    <location>
        <begin position="170"/>
        <end position="177"/>
    </location>
    <ligand>
        <name>ATP</name>
        <dbReference type="ChEBI" id="CHEBI:30616"/>
    </ligand>
</feature>
<feature type="site" description="Required for activity" evidence="1">
    <location>
        <position position="374"/>
    </location>
</feature>
<evidence type="ECO:0000255" key="1">
    <source>
        <dbReference type="HAMAP-Rule" id="MF_01346"/>
    </source>
</evidence>
<organism>
    <name type="scientific">Alcanivorax borkumensis (strain ATCC 700651 / DSM 11573 / NCIMB 13689 / SK2)</name>
    <dbReference type="NCBI Taxonomy" id="393595"/>
    <lineage>
        <taxon>Bacteria</taxon>
        <taxon>Pseudomonadati</taxon>
        <taxon>Pseudomonadota</taxon>
        <taxon>Gammaproteobacteria</taxon>
        <taxon>Oceanospirillales</taxon>
        <taxon>Alcanivoracaceae</taxon>
        <taxon>Alcanivorax</taxon>
    </lineage>
</organism>
<keyword id="KW-0066">ATP synthesis</keyword>
<keyword id="KW-0067">ATP-binding</keyword>
<keyword id="KW-0997">Cell inner membrane</keyword>
<keyword id="KW-1003">Cell membrane</keyword>
<keyword id="KW-0139">CF(1)</keyword>
<keyword id="KW-0375">Hydrogen ion transport</keyword>
<keyword id="KW-0406">Ion transport</keyword>
<keyword id="KW-0472">Membrane</keyword>
<keyword id="KW-0547">Nucleotide-binding</keyword>
<keyword id="KW-1185">Reference proteome</keyword>
<keyword id="KW-1278">Translocase</keyword>
<keyword id="KW-0813">Transport</keyword>
<proteinExistence type="inferred from homology"/>
<dbReference type="EC" id="7.1.2.2" evidence="1"/>
<dbReference type="EMBL" id="AM286690">
    <property type="protein sequence ID" value="CAL18176.1"/>
    <property type="molecule type" value="Genomic_DNA"/>
</dbReference>
<dbReference type="RefSeq" id="WP_011589999.1">
    <property type="nucleotide sequence ID" value="NC_008260.1"/>
</dbReference>
<dbReference type="SMR" id="Q0VKX2"/>
<dbReference type="STRING" id="393595.ABO_2728"/>
<dbReference type="KEGG" id="abo:ABO_2728"/>
<dbReference type="eggNOG" id="COG0056">
    <property type="taxonomic scope" value="Bacteria"/>
</dbReference>
<dbReference type="HOGENOM" id="CLU_010091_2_1_6"/>
<dbReference type="OrthoDB" id="9803053at2"/>
<dbReference type="Proteomes" id="UP000008871">
    <property type="component" value="Chromosome"/>
</dbReference>
<dbReference type="GO" id="GO:0005886">
    <property type="term" value="C:plasma membrane"/>
    <property type="evidence" value="ECO:0007669"/>
    <property type="project" value="UniProtKB-SubCell"/>
</dbReference>
<dbReference type="GO" id="GO:0045259">
    <property type="term" value="C:proton-transporting ATP synthase complex"/>
    <property type="evidence" value="ECO:0007669"/>
    <property type="project" value="UniProtKB-KW"/>
</dbReference>
<dbReference type="GO" id="GO:0043531">
    <property type="term" value="F:ADP binding"/>
    <property type="evidence" value="ECO:0007669"/>
    <property type="project" value="TreeGrafter"/>
</dbReference>
<dbReference type="GO" id="GO:0005524">
    <property type="term" value="F:ATP binding"/>
    <property type="evidence" value="ECO:0007669"/>
    <property type="project" value="UniProtKB-UniRule"/>
</dbReference>
<dbReference type="GO" id="GO:0046933">
    <property type="term" value="F:proton-transporting ATP synthase activity, rotational mechanism"/>
    <property type="evidence" value="ECO:0007669"/>
    <property type="project" value="UniProtKB-UniRule"/>
</dbReference>
<dbReference type="CDD" id="cd18113">
    <property type="entry name" value="ATP-synt_F1_alpha_C"/>
    <property type="match status" value="1"/>
</dbReference>
<dbReference type="CDD" id="cd18116">
    <property type="entry name" value="ATP-synt_F1_alpha_N"/>
    <property type="match status" value="1"/>
</dbReference>
<dbReference type="CDD" id="cd01132">
    <property type="entry name" value="F1-ATPase_alpha_CD"/>
    <property type="match status" value="1"/>
</dbReference>
<dbReference type="FunFam" id="1.20.150.20:FF:000001">
    <property type="entry name" value="ATP synthase subunit alpha"/>
    <property type="match status" value="1"/>
</dbReference>
<dbReference type="FunFam" id="2.40.30.20:FF:000001">
    <property type="entry name" value="ATP synthase subunit alpha"/>
    <property type="match status" value="1"/>
</dbReference>
<dbReference type="FunFam" id="3.40.50.300:FF:000002">
    <property type="entry name" value="ATP synthase subunit alpha"/>
    <property type="match status" value="1"/>
</dbReference>
<dbReference type="Gene3D" id="2.40.30.20">
    <property type="match status" value="1"/>
</dbReference>
<dbReference type="Gene3D" id="1.20.150.20">
    <property type="entry name" value="ATP synthase alpha/beta chain, C-terminal domain"/>
    <property type="match status" value="1"/>
</dbReference>
<dbReference type="Gene3D" id="3.40.50.300">
    <property type="entry name" value="P-loop containing nucleotide triphosphate hydrolases"/>
    <property type="match status" value="1"/>
</dbReference>
<dbReference type="HAMAP" id="MF_01346">
    <property type="entry name" value="ATP_synth_alpha_bact"/>
    <property type="match status" value="1"/>
</dbReference>
<dbReference type="InterPro" id="IPR023366">
    <property type="entry name" value="ATP_synth_asu-like_sf"/>
</dbReference>
<dbReference type="InterPro" id="IPR000793">
    <property type="entry name" value="ATP_synth_asu_C"/>
</dbReference>
<dbReference type="InterPro" id="IPR038376">
    <property type="entry name" value="ATP_synth_asu_C_sf"/>
</dbReference>
<dbReference type="InterPro" id="IPR033732">
    <property type="entry name" value="ATP_synth_F1_a_nt-bd_dom"/>
</dbReference>
<dbReference type="InterPro" id="IPR005294">
    <property type="entry name" value="ATP_synth_F1_asu"/>
</dbReference>
<dbReference type="InterPro" id="IPR004100">
    <property type="entry name" value="ATPase_F1/V1/A1_a/bsu_N"/>
</dbReference>
<dbReference type="InterPro" id="IPR036121">
    <property type="entry name" value="ATPase_F1/V1/A1_a/bsu_N_sf"/>
</dbReference>
<dbReference type="InterPro" id="IPR000194">
    <property type="entry name" value="ATPase_F1/V1/A1_a/bsu_nucl-bd"/>
</dbReference>
<dbReference type="InterPro" id="IPR027417">
    <property type="entry name" value="P-loop_NTPase"/>
</dbReference>
<dbReference type="NCBIfam" id="TIGR00962">
    <property type="entry name" value="atpA"/>
    <property type="match status" value="1"/>
</dbReference>
<dbReference type="NCBIfam" id="NF009884">
    <property type="entry name" value="PRK13343.1"/>
    <property type="match status" value="1"/>
</dbReference>
<dbReference type="PANTHER" id="PTHR48082">
    <property type="entry name" value="ATP SYNTHASE SUBUNIT ALPHA, MITOCHONDRIAL"/>
    <property type="match status" value="1"/>
</dbReference>
<dbReference type="PANTHER" id="PTHR48082:SF2">
    <property type="entry name" value="ATP SYNTHASE SUBUNIT ALPHA, MITOCHONDRIAL"/>
    <property type="match status" value="1"/>
</dbReference>
<dbReference type="Pfam" id="PF00006">
    <property type="entry name" value="ATP-synt_ab"/>
    <property type="match status" value="1"/>
</dbReference>
<dbReference type="Pfam" id="PF00306">
    <property type="entry name" value="ATP-synt_ab_C"/>
    <property type="match status" value="1"/>
</dbReference>
<dbReference type="Pfam" id="PF02874">
    <property type="entry name" value="ATP-synt_ab_N"/>
    <property type="match status" value="1"/>
</dbReference>
<dbReference type="PIRSF" id="PIRSF039088">
    <property type="entry name" value="F_ATPase_subunit_alpha"/>
    <property type="match status" value="1"/>
</dbReference>
<dbReference type="SUPFAM" id="SSF47917">
    <property type="entry name" value="C-terminal domain of alpha and beta subunits of F1 ATP synthase"/>
    <property type="match status" value="1"/>
</dbReference>
<dbReference type="SUPFAM" id="SSF50615">
    <property type="entry name" value="N-terminal domain of alpha and beta subunits of F1 ATP synthase"/>
    <property type="match status" value="1"/>
</dbReference>
<dbReference type="SUPFAM" id="SSF52540">
    <property type="entry name" value="P-loop containing nucleoside triphosphate hydrolases"/>
    <property type="match status" value="1"/>
</dbReference>
<comment type="function">
    <text evidence="1">Produces ATP from ADP in the presence of a proton gradient across the membrane. The alpha chain is a regulatory subunit.</text>
</comment>
<comment type="catalytic activity">
    <reaction evidence="1">
        <text>ATP + H2O + 4 H(+)(in) = ADP + phosphate + 5 H(+)(out)</text>
        <dbReference type="Rhea" id="RHEA:57720"/>
        <dbReference type="ChEBI" id="CHEBI:15377"/>
        <dbReference type="ChEBI" id="CHEBI:15378"/>
        <dbReference type="ChEBI" id="CHEBI:30616"/>
        <dbReference type="ChEBI" id="CHEBI:43474"/>
        <dbReference type="ChEBI" id="CHEBI:456216"/>
        <dbReference type="EC" id="7.1.2.2"/>
    </reaction>
</comment>
<comment type="subunit">
    <text evidence="1">F-type ATPases have 2 components, CF(1) - the catalytic core - and CF(0) - the membrane proton channel. CF(1) has five subunits: alpha(3), beta(3), gamma(1), delta(1), epsilon(1). CF(0) has three main subunits: a(1), b(2) and c(9-12). The alpha and beta chains form an alternating ring which encloses part of the gamma chain. CF(1) is attached to CF(0) by a central stalk formed by the gamma and epsilon chains, while a peripheral stalk is formed by the delta and b chains.</text>
</comment>
<comment type="subcellular location">
    <subcellularLocation>
        <location evidence="1">Cell inner membrane</location>
        <topology evidence="1">Peripheral membrane protein</topology>
    </subcellularLocation>
</comment>
<comment type="similarity">
    <text evidence="1">Belongs to the ATPase alpha/beta chains family.</text>
</comment>